<sequence length="199" mass="22138">MEKKKHGTNSISEALKVKAAVEQETATPEPTPQSETESADKIKQLEEALAAKEAEAAANWDKVLRERADLENYRKRVQKEKEELLKYGNESLILEILPAIDNMERALEHACDESMSAIVEGIKMTLCMLQSTLKKFGVAPVDAGKGTTFDPAYHQAMNQVESSEHEPNTIVSEFQKGYLLNERLLRPALVSVATAPKEQ</sequence>
<feature type="chain" id="PRO_1000085115" description="Protein GrpE">
    <location>
        <begin position="1"/>
        <end position="199"/>
    </location>
</feature>
<feature type="region of interest" description="Disordered" evidence="2">
    <location>
        <begin position="1"/>
        <end position="40"/>
    </location>
</feature>
<feature type="compositionally biased region" description="Polar residues" evidence="2">
    <location>
        <begin position="24"/>
        <end position="36"/>
    </location>
</feature>
<reference key="1">
    <citation type="submission" date="2007-05" db="EMBL/GenBank/DDBJ databases">
        <title>Complete sequence of Geobacter uraniireducens Rf4.</title>
        <authorList>
            <consortium name="US DOE Joint Genome Institute"/>
            <person name="Copeland A."/>
            <person name="Lucas S."/>
            <person name="Lapidus A."/>
            <person name="Barry K."/>
            <person name="Detter J.C."/>
            <person name="Glavina del Rio T."/>
            <person name="Hammon N."/>
            <person name="Israni S."/>
            <person name="Dalin E."/>
            <person name="Tice H."/>
            <person name="Pitluck S."/>
            <person name="Chertkov O."/>
            <person name="Brettin T."/>
            <person name="Bruce D."/>
            <person name="Han C."/>
            <person name="Schmutz J."/>
            <person name="Larimer F."/>
            <person name="Land M."/>
            <person name="Hauser L."/>
            <person name="Kyrpides N."/>
            <person name="Mikhailova N."/>
            <person name="Shelobolina E."/>
            <person name="Aklujkar M."/>
            <person name="Lovley D."/>
            <person name="Richardson P."/>
        </authorList>
    </citation>
    <scope>NUCLEOTIDE SEQUENCE [LARGE SCALE GENOMIC DNA]</scope>
    <source>
        <strain>ATCC BAA-1134 / JCM 13001 / Rf4</strain>
    </source>
</reference>
<gene>
    <name evidence="1" type="primary">grpE</name>
    <name type="ordered locus">Gura_0210</name>
</gene>
<name>GRPE_GEOUR</name>
<dbReference type="EMBL" id="CP000698">
    <property type="protein sequence ID" value="ABQ24426.1"/>
    <property type="molecule type" value="Genomic_DNA"/>
</dbReference>
<dbReference type="RefSeq" id="WP_011937155.1">
    <property type="nucleotide sequence ID" value="NC_009483.1"/>
</dbReference>
<dbReference type="SMR" id="A5GDC7"/>
<dbReference type="STRING" id="351605.Gura_0210"/>
<dbReference type="KEGG" id="gur:Gura_0210"/>
<dbReference type="HOGENOM" id="CLU_057217_6_0_7"/>
<dbReference type="OrthoDB" id="9789811at2"/>
<dbReference type="Proteomes" id="UP000006695">
    <property type="component" value="Chromosome"/>
</dbReference>
<dbReference type="GO" id="GO:0005829">
    <property type="term" value="C:cytosol"/>
    <property type="evidence" value="ECO:0007669"/>
    <property type="project" value="TreeGrafter"/>
</dbReference>
<dbReference type="GO" id="GO:0000774">
    <property type="term" value="F:adenyl-nucleotide exchange factor activity"/>
    <property type="evidence" value="ECO:0007669"/>
    <property type="project" value="InterPro"/>
</dbReference>
<dbReference type="GO" id="GO:0042803">
    <property type="term" value="F:protein homodimerization activity"/>
    <property type="evidence" value="ECO:0007669"/>
    <property type="project" value="InterPro"/>
</dbReference>
<dbReference type="GO" id="GO:0051087">
    <property type="term" value="F:protein-folding chaperone binding"/>
    <property type="evidence" value="ECO:0007669"/>
    <property type="project" value="InterPro"/>
</dbReference>
<dbReference type="GO" id="GO:0051082">
    <property type="term" value="F:unfolded protein binding"/>
    <property type="evidence" value="ECO:0007669"/>
    <property type="project" value="TreeGrafter"/>
</dbReference>
<dbReference type="GO" id="GO:0006457">
    <property type="term" value="P:protein folding"/>
    <property type="evidence" value="ECO:0007669"/>
    <property type="project" value="InterPro"/>
</dbReference>
<dbReference type="CDD" id="cd00446">
    <property type="entry name" value="GrpE"/>
    <property type="match status" value="1"/>
</dbReference>
<dbReference type="FunFam" id="2.30.22.10:FF:000001">
    <property type="entry name" value="Protein GrpE"/>
    <property type="match status" value="1"/>
</dbReference>
<dbReference type="Gene3D" id="3.90.20.20">
    <property type="match status" value="1"/>
</dbReference>
<dbReference type="Gene3D" id="2.30.22.10">
    <property type="entry name" value="Head domain of nucleotide exchange factor GrpE"/>
    <property type="match status" value="1"/>
</dbReference>
<dbReference type="HAMAP" id="MF_01151">
    <property type="entry name" value="GrpE"/>
    <property type="match status" value="1"/>
</dbReference>
<dbReference type="InterPro" id="IPR000740">
    <property type="entry name" value="GrpE"/>
</dbReference>
<dbReference type="InterPro" id="IPR013805">
    <property type="entry name" value="GrpE_coiled_coil"/>
</dbReference>
<dbReference type="InterPro" id="IPR009012">
    <property type="entry name" value="GrpE_head"/>
</dbReference>
<dbReference type="NCBIfam" id="NF010738">
    <property type="entry name" value="PRK14140.1"/>
    <property type="match status" value="1"/>
</dbReference>
<dbReference type="NCBIfam" id="NF010748">
    <property type="entry name" value="PRK14150.1"/>
    <property type="match status" value="1"/>
</dbReference>
<dbReference type="NCBIfam" id="NF010755">
    <property type="entry name" value="PRK14158.1"/>
    <property type="match status" value="1"/>
</dbReference>
<dbReference type="PANTHER" id="PTHR21237">
    <property type="entry name" value="GRPE PROTEIN"/>
    <property type="match status" value="1"/>
</dbReference>
<dbReference type="PANTHER" id="PTHR21237:SF23">
    <property type="entry name" value="GRPE PROTEIN HOMOLOG, MITOCHONDRIAL"/>
    <property type="match status" value="1"/>
</dbReference>
<dbReference type="Pfam" id="PF01025">
    <property type="entry name" value="GrpE"/>
    <property type="match status" value="1"/>
</dbReference>
<dbReference type="PRINTS" id="PR00773">
    <property type="entry name" value="GRPEPROTEIN"/>
</dbReference>
<dbReference type="SUPFAM" id="SSF58014">
    <property type="entry name" value="Coiled-coil domain of nucleotide exchange factor GrpE"/>
    <property type="match status" value="1"/>
</dbReference>
<dbReference type="SUPFAM" id="SSF51064">
    <property type="entry name" value="Head domain of nucleotide exchange factor GrpE"/>
    <property type="match status" value="1"/>
</dbReference>
<dbReference type="PROSITE" id="PS01071">
    <property type="entry name" value="GRPE"/>
    <property type="match status" value="1"/>
</dbReference>
<proteinExistence type="inferred from homology"/>
<protein>
    <recommendedName>
        <fullName evidence="1">Protein GrpE</fullName>
    </recommendedName>
    <alternativeName>
        <fullName evidence="1">HSP-70 cofactor</fullName>
    </alternativeName>
</protein>
<organism>
    <name type="scientific">Geotalea uraniireducens (strain Rf4)</name>
    <name type="common">Geobacter uraniireducens</name>
    <dbReference type="NCBI Taxonomy" id="351605"/>
    <lineage>
        <taxon>Bacteria</taxon>
        <taxon>Pseudomonadati</taxon>
        <taxon>Thermodesulfobacteriota</taxon>
        <taxon>Desulfuromonadia</taxon>
        <taxon>Geobacterales</taxon>
        <taxon>Geobacteraceae</taxon>
        <taxon>Geotalea</taxon>
    </lineage>
</organism>
<evidence type="ECO:0000255" key="1">
    <source>
        <dbReference type="HAMAP-Rule" id="MF_01151"/>
    </source>
</evidence>
<evidence type="ECO:0000256" key="2">
    <source>
        <dbReference type="SAM" id="MobiDB-lite"/>
    </source>
</evidence>
<comment type="function">
    <text evidence="1">Participates actively in the response to hyperosmotic and heat shock by preventing the aggregation of stress-denatured proteins, in association with DnaK and GrpE. It is the nucleotide exchange factor for DnaK and may function as a thermosensor. Unfolded proteins bind initially to DnaJ; upon interaction with the DnaJ-bound protein, DnaK hydrolyzes its bound ATP, resulting in the formation of a stable complex. GrpE releases ADP from DnaK; ATP binding to DnaK triggers the release of the substrate protein, thus completing the reaction cycle. Several rounds of ATP-dependent interactions between DnaJ, DnaK and GrpE are required for fully efficient folding.</text>
</comment>
<comment type="subunit">
    <text evidence="1">Homodimer.</text>
</comment>
<comment type="subcellular location">
    <subcellularLocation>
        <location evidence="1">Cytoplasm</location>
    </subcellularLocation>
</comment>
<comment type="similarity">
    <text evidence="1">Belongs to the GrpE family.</text>
</comment>
<accession>A5GDC7</accession>
<keyword id="KW-0143">Chaperone</keyword>
<keyword id="KW-0963">Cytoplasm</keyword>
<keyword id="KW-1185">Reference proteome</keyword>
<keyword id="KW-0346">Stress response</keyword>